<gene>
    <name type="primary">xerD</name>
    <name type="ordered locus">VC_2419</name>
</gene>
<evidence type="ECO:0000250" key="1"/>
<evidence type="ECO:0000255" key="2">
    <source>
        <dbReference type="PROSITE-ProRule" id="PRU01246"/>
    </source>
</evidence>
<evidence type="ECO:0000255" key="3">
    <source>
        <dbReference type="PROSITE-ProRule" id="PRU01248"/>
    </source>
</evidence>
<evidence type="ECO:0000305" key="4"/>
<sequence length="302" mass="34565">MSEALSPDQGLVEQFLDTMWFERGLAENTVASYRNDLSKLLEWMAQNQYRLDFISFAGLQEYQSWLSEQNYKPTSKARMLSAIRRLFQYLHREKVRADDPSALLVSPKLPTRLPKDLSEAQVEALLSAPDPQSPLELRDKAMLELLYATGLRVTELVSLTMENMSLRQGVVRVMGKGGKERLVPMGENAIEWIETFLQQGRSLLLGEQTSDIVFPSSRGQQMTRQTFWHRIKHYAVIAGIDVEKLSPHVLRHAFATHLLNYGADLRVVQMLLGHSDLSTTQIYTHVATERLKQLHNEHHPRA</sequence>
<reference key="1">
    <citation type="journal article" date="2000" name="Nature">
        <title>DNA sequence of both chromosomes of the cholera pathogen Vibrio cholerae.</title>
        <authorList>
            <person name="Heidelberg J.F."/>
            <person name="Eisen J.A."/>
            <person name="Nelson W.C."/>
            <person name="Clayton R.A."/>
            <person name="Gwinn M.L."/>
            <person name="Dodson R.J."/>
            <person name="Haft D.H."/>
            <person name="Hickey E.K."/>
            <person name="Peterson J.D."/>
            <person name="Umayam L.A."/>
            <person name="Gill S.R."/>
            <person name="Nelson K.E."/>
            <person name="Read T.D."/>
            <person name="Tettelin H."/>
            <person name="Richardson D.L."/>
            <person name="Ermolaeva M.D."/>
            <person name="Vamathevan J.J."/>
            <person name="Bass S."/>
            <person name="Qin H."/>
            <person name="Dragoi I."/>
            <person name="Sellers P."/>
            <person name="McDonald L.A."/>
            <person name="Utterback T.R."/>
            <person name="Fleischmann R.D."/>
            <person name="Nierman W.C."/>
            <person name="White O."/>
            <person name="Salzberg S.L."/>
            <person name="Smith H.O."/>
            <person name="Colwell R.R."/>
            <person name="Mekalanos J.J."/>
            <person name="Venter J.C."/>
            <person name="Fraser C.M."/>
        </authorList>
    </citation>
    <scope>NUCLEOTIDE SEQUENCE [LARGE SCALE GENOMIC DNA]</scope>
    <source>
        <strain>ATCC 39315 / El Tor Inaba N16961</strain>
    </source>
</reference>
<reference key="2">
    <citation type="journal article" date="2002" name="Nature">
        <title>Filamentous phage integration requires the host recombinases XerC and XerD.</title>
        <authorList>
            <person name="Huber K.E."/>
            <person name="Waldor M.K."/>
        </authorList>
    </citation>
    <scope>BACTERIOPHAGE INFECTION</scope>
</reference>
<comment type="function">
    <text evidence="1">Site-specific tyrosine recombinase, which acts by catalyzing the cutting and rejoining of the recombining DNA molecules. The XerC-XerD complex is essential to convert dimers of the bacterial chromosome into monomers to permit their segregation at cell division. It also contributes to the segregational stability of plasmids (By similarity).</text>
</comment>
<comment type="subunit">
    <text evidence="1">Forms a cyclic heterotetrameric complex composed of two molecules of XerC and two molecules of XerD.</text>
</comment>
<comment type="subcellular location">
    <subcellularLocation>
        <location evidence="1">Cytoplasm</location>
    </subcellularLocation>
</comment>
<comment type="miscellaneous">
    <text>During infection by the bacteriophage CTX-phi, it is required by the bacteriophage, which uses host XerC and XerD proteins to integrate the bacterial genome.</text>
</comment>
<comment type="similarity">
    <text evidence="4">Belongs to the 'phage' integrase family. XerD subfamily.</text>
</comment>
<proteinExistence type="inferred from homology"/>
<keyword id="KW-0131">Cell cycle</keyword>
<keyword id="KW-0132">Cell division</keyword>
<keyword id="KW-0159">Chromosome partition</keyword>
<keyword id="KW-0963">Cytoplasm</keyword>
<keyword id="KW-0229">DNA integration</keyword>
<keyword id="KW-0233">DNA recombination</keyword>
<keyword id="KW-0238">DNA-binding</keyword>
<keyword id="KW-1185">Reference proteome</keyword>
<feature type="chain" id="PRO_0000095427" description="Tyrosine recombinase XerD">
    <location>
        <begin position="1"/>
        <end position="302"/>
    </location>
</feature>
<feature type="domain" description="Core-binding (CB)" evidence="3">
    <location>
        <begin position="6"/>
        <end position="91"/>
    </location>
</feature>
<feature type="domain" description="Tyr recombinase" evidence="2">
    <location>
        <begin position="112"/>
        <end position="296"/>
    </location>
</feature>
<feature type="active site" evidence="2">
    <location>
        <position position="152"/>
    </location>
</feature>
<feature type="active site" evidence="2">
    <location>
        <position position="176"/>
    </location>
</feature>
<feature type="active site" evidence="2">
    <location>
        <position position="248"/>
    </location>
</feature>
<feature type="active site" evidence="2">
    <location>
        <position position="251"/>
    </location>
</feature>
<feature type="active site" evidence="2">
    <location>
        <position position="274"/>
    </location>
</feature>
<feature type="active site" description="O-(3'-phospho-DNA)-tyrosine intermediate" evidence="2">
    <location>
        <position position="283"/>
    </location>
</feature>
<dbReference type="EMBL" id="AE003852">
    <property type="protein sequence ID" value="AAF95562.1"/>
    <property type="molecule type" value="Genomic_DNA"/>
</dbReference>
<dbReference type="PIR" id="A82080">
    <property type="entry name" value="A82080"/>
</dbReference>
<dbReference type="RefSeq" id="NP_232049.1">
    <property type="nucleotide sequence ID" value="NC_002505.1"/>
</dbReference>
<dbReference type="RefSeq" id="WP_001287472.1">
    <property type="nucleotide sequence ID" value="NZ_LT906614.1"/>
</dbReference>
<dbReference type="SMR" id="Q9KPE9"/>
<dbReference type="STRING" id="243277.VC_2419"/>
<dbReference type="DNASU" id="2613088"/>
<dbReference type="EnsemblBacteria" id="AAF95562">
    <property type="protein sequence ID" value="AAF95562"/>
    <property type="gene ID" value="VC_2419"/>
</dbReference>
<dbReference type="GeneID" id="69718974"/>
<dbReference type="KEGG" id="vch:VC_2419"/>
<dbReference type="PATRIC" id="fig|243277.26.peg.2302"/>
<dbReference type="eggNOG" id="COG4974">
    <property type="taxonomic scope" value="Bacteria"/>
</dbReference>
<dbReference type="HOGENOM" id="CLU_027562_9_0_6"/>
<dbReference type="Proteomes" id="UP000000584">
    <property type="component" value="Chromosome 1"/>
</dbReference>
<dbReference type="GO" id="GO:0005737">
    <property type="term" value="C:cytoplasm"/>
    <property type="evidence" value="ECO:0007669"/>
    <property type="project" value="UniProtKB-SubCell"/>
</dbReference>
<dbReference type="GO" id="GO:0048476">
    <property type="term" value="C:Holliday junction resolvase complex"/>
    <property type="evidence" value="ECO:0000318"/>
    <property type="project" value="GO_Central"/>
</dbReference>
<dbReference type="GO" id="GO:0003677">
    <property type="term" value="F:DNA binding"/>
    <property type="evidence" value="ECO:0000318"/>
    <property type="project" value="GO_Central"/>
</dbReference>
<dbReference type="GO" id="GO:0009037">
    <property type="term" value="F:tyrosine-based site-specific recombinase activity"/>
    <property type="evidence" value="ECO:0000318"/>
    <property type="project" value="GO_Central"/>
</dbReference>
<dbReference type="GO" id="GO:0051301">
    <property type="term" value="P:cell division"/>
    <property type="evidence" value="ECO:0007669"/>
    <property type="project" value="UniProtKB-KW"/>
</dbReference>
<dbReference type="GO" id="GO:0007059">
    <property type="term" value="P:chromosome segregation"/>
    <property type="evidence" value="ECO:0000318"/>
    <property type="project" value="GO_Central"/>
</dbReference>
<dbReference type="GO" id="GO:0006310">
    <property type="term" value="P:DNA recombination"/>
    <property type="evidence" value="ECO:0000318"/>
    <property type="project" value="GO_Central"/>
</dbReference>
<dbReference type="GO" id="GO:0006313">
    <property type="term" value="P:DNA transposition"/>
    <property type="evidence" value="ECO:0007669"/>
    <property type="project" value="UniProtKB-UniRule"/>
</dbReference>
<dbReference type="GO" id="GO:0071139">
    <property type="term" value="P:resolution of DNA recombination intermediates"/>
    <property type="evidence" value="ECO:0000318"/>
    <property type="project" value="GO_Central"/>
</dbReference>
<dbReference type="CDD" id="cd00798">
    <property type="entry name" value="INT_XerDC_C"/>
    <property type="match status" value="1"/>
</dbReference>
<dbReference type="Gene3D" id="1.10.150.130">
    <property type="match status" value="1"/>
</dbReference>
<dbReference type="Gene3D" id="1.10.443.10">
    <property type="entry name" value="Intergrase catalytic core"/>
    <property type="match status" value="1"/>
</dbReference>
<dbReference type="HAMAP" id="MF_01808">
    <property type="entry name" value="Recomb_XerC_XerD"/>
    <property type="match status" value="1"/>
</dbReference>
<dbReference type="HAMAP" id="MF_01807">
    <property type="entry name" value="Recomb_XerD"/>
    <property type="match status" value="1"/>
</dbReference>
<dbReference type="InterPro" id="IPR044068">
    <property type="entry name" value="CB"/>
</dbReference>
<dbReference type="InterPro" id="IPR011010">
    <property type="entry name" value="DNA_brk_join_enz"/>
</dbReference>
<dbReference type="InterPro" id="IPR013762">
    <property type="entry name" value="Integrase-like_cat_sf"/>
</dbReference>
<dbReference type="InterPro" id="IPR002104">
    <property type="entry name" value="Integrase_catalytic"/>
</dbReference>
<dbReference type="InterPro" id="IPR010998">
    <property type="entry name" value="Integrase_recombinase_N"/>
</dbReference>
<dbReference type="InterPro" id="IPR004107">
    <property type="entry name" value="Integrase_SAM-like_N"/>
</dbReference>
<dbReference type="InterPro" id="IPR011932">
    <property type="entry name" value="Recomb_XerD"/>
</dbReference>
<dbReference type="InterPro" id="IPR023009">
    <property type="entry name" value="Tyrosine_recombinase_XerC/XerD"/>
</dbReference>
<dbReference type="InterPro" id="IPR050090">
    <property type="entry name" value="Tyrosine_recombinase_XerCD"/>
</dbReference>
<dbReference type="NCBIfam" id="NF001399">
    <property type="entry name" value="PRK00283.1"/>
    <property type="match status" value="1"/>
</dbReference>
<dbReference type="NCBIfam" id="NF040815">
    <property type="entry name" value="recomb_XerA_Arch"/>
    <property type="match status" value="1"/>
</dbReference>
<dbReference type="NCBIfam" id="TIGR02225">
    <property type="entry name" value="recomb_XerD"/>
    <property type="match status" value="1"/>
</dbReference>
<dbReference type="PANTHER" id="PTHR30349">
    <property type="entry name" value="PHAGE INTEGRASE-RELATED"/>
    <property type="match status" value="1"/>
</dbReference>
<dbReference type="PANTHER" id="PTHR30349:SF90">
    <property type="entry name" value="TYROSINE RECOMBINASE XERD"/>
    <property type="match status" value="1"/>
</dbReference>
<dbReference type="Pfam" id="PF02899">
    <property type="entry name" value="Phage_int_SAM_1"/>
    <property type="match status" value="1"/>
</dbReference>
<dbReference type="Pfam" id="PF00589">
    <property type="entry name" value="Phage_integrase"/>
    <property type="match status" value="1"/>
</dbReference>
<dbReference type="SUPFAM" id="SSF56349">
    <property type="entry name" value="DNA breaking-rejoining enzymes"/>
    <property type="match status" value="1"/>
</dbReference>
<dbReference type="PROSITE" id="PS51900">
    <property type="entry name" value="CB"/>
    <property type="match status" value="1"/>
</dbReference>
<dbReference type="PROSITE" id="PS51898">
    <property type="entry name" value="TYR_RECOMBINASE"/>
    <property type="match status" value="1"/>
</dbReference>
<organism>
    <name type="scientific">Vibrio cholerae serotype O1 (strain ATCC 39315 / El Tor Inaba N16961)</name>
    <dbReference type="NCBI Taxonomy" id="243277"/>
    <lineage>
        <taxon>Bacteria</taxon>
        <taxon>Pseudomonadati</taxon>
        <taxon>Pseudomonadota</taxon>
        <taxon>Gammaproteobacteria</taxon>
        <taxon>Vibrionales</taxon>
        <taxon>Vibrionaceae</taxon>
        <taxon>Vibrio</taxon>
    </lineage>
</organism>
<name>XERD_VIBCH</name>
<accession>Q9KPE9</accession>
<protein>
    <recommendedName>
        <fullName>Tyrosine recombinase XerD</fullName>
    </recommendedName>
</protein>